<comment type="function">
    <text evidence="1">With S4 and S12 plays an important role in translational accuracy.</text>
</comment>
<comment type="function">
    <text evidence="1">Located at the back of the 30S subunit body where it stabilizes the conformation of the head with respect to the body.</text>
</comment>
<comment type="subunit">
    <text evidence="1">Part of the 30S ribosomal subunit. Contacts proteins S4 and S8.</text>
</comment>
<comment type="domain">
    <text>The N-terminal domain interacts with the head of the 30S subunit; the C-terminal domain interacts with the body and contacts protein S4. The interaction surface between S4 and S5 is involved in control of translational fidelity.</text>
</comment>
<comment type="similarity">
    <text evidence="1">Belongs to the universal ribosomal protein uS5 family.</text>
</comment>
<dbReference type="EMBL" id="AP006627">
    <property type="protein sequence ID" value="BAD62710.1"/>
    <property type="molecule type" value="Genomic_DNA"/>
</dbReference>
<dbReference type="RefSeq" id="WP_011245031.1">
    <property type="nucleotide sequence ID" value="NC_006582.1"/>
</dbReference>
<dbReference type="SMR" id="Q5WLP5"/>
<dbReference type="STRING" id="66692.ABC0167"/>
<dbReference type="GeneID" id="86924203"/>
<dbReference type="KEGG" id="bcl:ABC0167"/>
<dbReference type="eggNOG" id="COG0098">
    <property type="taxonomic scope" value="Bacteria"/>
</dbReference>
<dbReference type="HOGENOM" id="CLU_065898_2_2_9"/>
<dbReference type="OrthoDB" id="9809045at2"/>
<dbReference type="Proteomes" id="UP000001168">
    <property type="component" value="Chromosome"/>
</dbReference>
<dbReference type="GO" id="GO:0015935">
    <property type="term" value="C:small ribosomal subunit"/>
    <property type="evidence" value="ECO:0007669"/>
    <property type="project" value="InterPro"/>
</dbReference>
<dbReference type="GO" id="GO:0019843">
    <property type="term" value="F:rRNA binding"/>
    <property type="evidence" value="ECO:0007669"/>
    <property type="project" value="UniProtKB-UniRule"/>
</dbReference>
<dbReference type="GO" id="GO:0003735">
    <property type="term" value="F:structural constituent of ribosome"/>
    <property type="evidence" value="ECO:0007669"/>
    <property type="project" value="InterPro"/>
</dbReference>
<dbReference type="GO" id="GO:0006412">
    <property type="term" value="P:translation"/>
    <property type="evidence" value="ECO:0007669"/>
    <property type="project" value="UniProtKB-UniRule"/>
</dbReference>
<dbReference type="FunFam" id="3.30.160.20:FF:000001">
    <property type="entry name" value="30S ribosomal protein S5"/>
    <property type="match status" value="1"/>
</dbReference>
<dbReference type="FunFam" id="3.30.230.10:FF:000002">
    <property type="entry name" value="30S ribosomal protein S5"/>
    <property type="match status" value="1"/>
</dbReference>
<dbReference type="Gene3D" id="3.30.160.20">
    <property type="match status" value="1"/>
</dbReference>
<dbReference type="Gene3D" id="3.30.230.10">
    <property type="match status" value="1"/>
</dbReference>
<dbReference type="HAMAP" id="MF_01307_B">
    <property type="entry name" value="Ribosomal_uS5_B"/>
    <property type="match status" value="1"/>
</dbReference>
<dbReference type="InterPro" id="IPR020568">
    <property type="entry name" value="Ribosomal_Su5_D2-typ_SF"/>
</dbReference>
<dbReference type="InterPro" id="IPR000851">
    <property type="entry name" value="Ribosomal_uS5"/>
</dbReference>
<dbReference type="InterPro" id="IPR005712">
    <property type="entry name" value="Ribosomal_uS5_bac-type"/>
</dbReference>
<dbReference type="InterPro" id="IPR005324">
    <property type="entry name" value="Ribosomal_uS5_C"/>
</dbReference>
<dbReference type="InterPro" id="IPR013810">
    <property type="entry name" value="Ribosomal_uS5_N"/>
</dbReference>
<dbReference type="InterPro" id="IPR018192">
    <property type="entry name" value="Ribosomal_uS5_N_CS"/>
</dbReference>
<dbReference type="InterPro" id="IPR014721">
    <property type="entry name" value="Ribsml_uS5_D2-typ_fold_subgr"/>
</dbReference>
<dbReference type="NCBIfam" id="TIGR01021">
    <property type="entry name" value="rpsE_bact"/>
    <property type="match status" value="1"/>
</dbReference>
<dbReference type="PANTHER" id="PTHR48277">
    <property type="entry name" value="MITOCHONDRIAL RIBOSOMAL PROTEIN S5"/>
    <property type="match status" value="1"/>
</dbReference>
<dbReference type="PANTHER" id="PTHR48277:SF1">
    <property type="entry name" value="MITOCHONDRIAL RIBOSOMAL PROTEIN S5"/>
    <property type="match status" value="1"/>
</dbReference>
<dbReference type="Pfam" id="PF00333">
    <property type="entry name" value="Ribosomal_S5"/>
    <property type="match status" value="1"/>
</dbReference>
<dbReference type="Pfam" id="PF03719">
    <property type="entry name" value="Ribosomal_S5_C"/>
    <property type="match status" value="1"/>
</dbReference>
<dbReference type="SUPFAM" id="SSF54768">
    <property type="entry name" value="dsRNA-binding domain-like"/>
    <property type="match status" value="1"/>
</dbReference>
<dbReference type="SUPFAM" id="SSF54211">
    <property type="entry name" value="Ribosomal protein S5 domain 2-like"/>
    <property type="match status" value="1"/>
</dbReference>
<dbReference type="PROSITE" id="PS00585">
    <property type="entry name" value="RIBOSOMAL_S5"/>
    <property type="match status" value="1"/>
</dbReference>
<dbReference type="PROSITE" id="PS50881">
    <property type="entry name" value="S5_DSRBD"/>
    <property type="match status" value="1"/>
</dbReference>
<feature type="chain" id="PRO_0000131468" description="Small ribosomal subunit protein uS5">
    <location>
        <begin position="1"/>
        <end position="166"/>
    </location>
</feature>
<feature type="domain" description="S5 DRBM" evidence="1">
    <location>
        <begin position="11"/>
        <end position="74"/>
    </location>
</feature>
<keyword id="KW-1185">Reference proteome</keyword>
<keyword id="KW-0687">Ribonucleoprotein</keyword>
<keyword id="KW-0689">Ribosomal protein</keyword>
<keyword id="KW-0694">RNA-binding</keyword>
<keyword id="KW-0699">rRNA-binding</keyword>
<reference key="1">
    <citation type="submission" date="2003-10" db="EMBL/GenBank/DDBJ databases">
        <title>The complete genome sequence of the alkaliphilic Bacillus clausii KSM-K16.</title>
        <authorList>
            <person name="Takaki Y."/>
            <person name="Kageyama Y."/>
            <person name="Shimamura S."/>
            <person name="Suzuki H."/>
            <person name="Nishi S."/>
            <person name="Hatada Y."/>
            <person name="Kawai S."/>
            <person name="Ito S."/>
            <person name="Horikoshi K."/>
        </authorList>
    </citation>
    <scope>NUCLEOTIDE SEQUENCE [LARGE SCALE GENOMIC DNA]</scope>
    <source>
        <strain>KSM-K16</strain>
    </source>
</reference>
<sequence length="166" mass="17586">MRSIDPNTLELEEKVVTINRVAKVVKGGRRFRFAALVVVGDKNGHVGFGMGKAQEVPEAIRKAVEDAKKNLIEVPIVNTTIPHQIVGRFGAGRVFLKPASEGTGVIAGGPVRAVLELAGIGDVLSKSLGSSNPINMVRATITGLTNLKRAEEVAKLRGKSVEELLG</sequence>
<evidence type="ECO:0000255" key="1">
    <source>
        <dbReference type="HAMAP-Rule" id="MF_01307"/>
    </source>
</evidence>
<evidence type="ECO:0000305" key="2"/>
<protein>
    <recommendedName>
        <fullName evidence="1">Small ribosomal subunit protein uS5</fullName>
    </recommendedName>
    <alternativeName>
        <fullName evidence="2">30S ribosomal protein S5</fullName>
    </alternativeName>
</protein>
<name>RS5_SHOC1</name>
<accession>Q5WLP5</accession>
<gene>
    <name evidence="1" type="primary">rpsE</name>
    <name type="ordered locus">ABC0167</name>
</gene>
<proteinExistence type="inferred from homology"/>
<organism>
    <name type="scientific">Shouchella clausii (strain KSM-K16)</name>
    <name type="common">Alkalihalobacillus clausii</name>
    <dbReference type="NCBI Taxonomy" id="66692"/>
    <lineage>
        <taxon>Bacteria</taxon>
        <taxon>Bacillati</taxon>
        <taxon>Bacillota</taxon>
        <taxon>Bacilli</taxon>
        <taxon>Bacillales</taxon>
        <taxon>Bacillaceae</taxon>
        <taxon>Shouchella</taxon>
    </lineage>
</organism>